<sequence>GENEPPKKKAPDGCFGHKIDRIGSHSGLGCNKFKPGH</sequence>
<protein>
    <recommendedName>
        <fullName>Natriuretic peptide PNP</fullName>
    </recommendedName>
</protein>
<feature type="peptide" id="PRO_0000045077" description="Natriuretic peptide PNP">
    <location>
        <begin position="1"/>
        <end position="37"/>
    </location>
</feature>
<feature type="disulfide bond" evidence="2">
    <location>
        <begin position="14"/>
        <end position="30"/>
    </location>
</feature>
<feature type="mutagenesis site" description="Does not affect blood pressure or diuresis; when associated with S-18; S-21; R-23 and 24-S--S-26 Del." evidence="3">
    <original>G</original>
    <variation>T</variation>
    <location>
        <position position="16"/>
    </location>
</feature>
<feature type="mutagenesis site" description="Does not affect blood pressure or diuresis; when associated with T-16; S-21; R-23 and 24-S--S-26 Del." evidence="3">
    <original>K</original>
    <variation>S</variation>
    <location>
        <position position="18"/>
    </location>
</feature>
<feature type="mutagenesis site" description="Does not affect blood pressure or diuresis; when associated with T-16; S-18; R-23 and 24-S--S-26 Del." evidence="3">
    <original>R</original>
    <variation>S</variation>
    <location>
        <position position="21"/>
    </location>
</feature>
<feature type="mutagenesis site" description="Does not affect blood pressure or diuresis; when associated with T-16; S-18; S-21 and 24-S--S-26 Del." evidence="3">
    <original>G</original>
    <variation>R</variation>
    <location>
        <position position="23"/>
    </location>
</feature>
<feature type="mutagenesis site" description="Does not affect blood pressure or diuresis; when associated with T-16; S-18; S-21 and R-23." evidence="3">
    <location>
        <begin position="24"/>
        <end position="26"/>
    </location>
</feature>
<reference evidence="4" key="1">
    <citation type="journal article" date="2004" name="FEBS Lett.">
        <title>Functional and structural characterization of a novel member of the natriuretic family of peptides from the venom of Pseudocerastes persicus.</title>
        <authorList>
            <person name="Amininasab M."/>
            <person name="Elmi M.M."/>
            <person name="Endlich N."/>
            <person name="Endlich K."/>
            <person name="Parekh N."/>
            <person name="Naderi-Manesh H."/>
            <person name="Schaller J."/>
            <person name="Mostafavi H."/>
            <person name="Sattler M."/>
            <person name="Sarbolouki M.N."/>
            <person name="Muhle-Goll C."/>
        </authorList>
    </citation>
    <scope>PROTEIN SEQUENCE</scope>
    <scope>FUNCTION</scope>
    <scope>SUBUNIT</scope>
    <scope>SUBCELLULAR LOCATION</scope>
    <scope>TISSUE SPECIFICITY</scope>
    <scope>MASS SPECTROMETRY</scope>
    <scope>DISULFIDE BOND</scope>
    <source>
        <tissue evidence="2">Venom</tissue>
    </source>
</reference>
<reference key="2">
    <citation type="journal article" date="2006" name="Protein Pept. Lett.">
        <title>Structural and functional characterization of a mutant of Pseudocerastes persicus natriuretic peptide.</title>
        <authorList>
            <person name="Elmi M.M."/>
            <person name="Amininasab M."/>
            <person name="Hondo T."/>
            <person name="Kikuchi J."/>
            <person name="Kuroda Y."/>
            <person name="Naderi-Manesh H."/>
            <person name="Sarbolouki M.N."/>
        </authorList>
    </citation>
    <scope>MUTAGENESIS OF GLY-16; LYS-18; ARG-21; GLY-23 AND 24-SER--SER-26</scope>
    <scope>STRUCTURE BY NMR</scope>
</reference>
<organism>
    <name type="scientific">Pseudocerastes persicus</name>
    <name type="common">Persian horned viper</name>
    <name type="synonym">False horned viper</name>
    <dbReference type="NCBI Taxonomy" id="47769"/>
    <lineage>
        <taxon>Eukaryota</taxon>
        <taxon>Metazoa</taxon>
        <taxon>Chordata</taxon>
        <taxon>Craniata</taxon>
        <taxon>Vertebrata</taxon>
        <taxon>Euteleostomi</taxon>
        <taxon>Lepidosauria</taxon>
        <taxon>Squamata</taxon>
        <taxon>Bifurcata</taxon>
        <taxon>Unidentata</taxon>
        <taxon>Episquamata</taxon>
        <taxon>Toxicofera</taxon>
        <taxon>Serpentes</taxon>
        <taxon>Colubroidea</taxon>
        <taxon>Viperidae</taxon>
        <taxon>Viperinae</taxon>
        <taxon>Pseudocerastes</taxon>
    </lineage>
</organism>
<dbReference type="GO" id="GO:0005576">
    <property type="term" value="C:extracellular region"/>
    <property type="evidence" value="ECO:0000314"/>
    <property type="project" value="UniProtKB"/>
</dbReference>
<dbReference type="GO" id="GO:0005179">
    <property type="term" value="F:hormone activity"/>
    <property type="evidence" value="ECO:0007669"/>
    <property type="project" value="InterPro"/>
</dbReference>
<dbReference type="GO" id="GO:0048018">
    <property type="term" value="F:receptor ligand activity"/>
    <property type="evidence" value="ECO:0000314"/>
    <property type="project" value="UniProtKB"/>
</dbReference>
<dbReference type="GO" id="GO:0090729">
    <property type="term" value="F:toxin activity"/>
    <property type="evidence" value="ECO:0000314"/>
    <property type="project" value="UniProtKB"/>
</dbReference>
<dbReference type="GO" id="GO:0008217">
    <property type="term" value="P:regulation of blood pressure"/>
    <property type="evidence" value="ECO:0007669"/>
    <property type="project" value="UniProtKB-KW"/>
</dbReference>
<dbReference type="GO" id="GO:0042311">
    <property type="term" value="P:vasodilation"/>
    <property type="evidence" value="ECO:0007669"/>
    <property type="project" value="UniProtKB-KW"/>
</dbReference>
<dbReference type="GO" id="GO:0044514">
    <property type="term" value="P:venom-mediated activation of G protein-coupled signaling in another organism"/>
    <property type="evidence" value="ECO:0000314"/>
    <property type="project" value="UniProtKB"/>
</dbReference>
<dbReference type="InterPro" id="IPR000663">
    <property type="entry name" value="Natr_peptide"/>
</dbReference>
<dbReference type="InterPro" id="IPR030480">
    <property type="entry name" value="Natr_peptide_CS"/>
</dbReference>
<dbReference type="InterPro" id="IPR002408">
    <property type="entry name" value="Natriuretic_peptide_brain"/>
</dbReference>
<dbReference type="Pfam" id="PF00212">
    <property type="entry name" value="ANP"/>
    <property type="match status" value="1"/>
</dbReference>
<dbReference type="PRINTS" id="PR00712">
    <property type="entry name" value="BNATPEPTIDE"/>
</dbReference>
<dbReference type="PRINTS" id="PR00710">
    <property type="entry name" value="NATPEPTIDES"/>
</dbReference>
<dbReference type="SMART" id="SM00183">
    <property type="entry name" value="NAT_PEP"/>
    <property type="match status" value="1"/>
</dbReference>
<dbReference type="PROSITE" id="PS00263">
    <property type="entry name" value="NATRIURETIC_PEPTIDE"/>
    <property type="match status" value="1"/>
</dbReference>
<evidence type="ECO:0000255" key="1"/>
<evidence type="ECO:0000269" key="2">
    <source>
    </source>
</evidence>
<evidence type="ECO:0000269" key="3">
    <source>
    </source>
</evidence>
<evidence type="ECO:0000305" key="4"/>
<proteinExistence type="evidence at protein level"/>
<name>VNP_PSEPC</name>
<accession>P82972</accession>
<keyword id="KW-0903">Direct protein sequencing</keyword>
<keyword id="KW-1015">Disulfide bond</keyword>
<keyword id="KW-0382">Hypotensive agent</keyword>
<keyword id="KW-0964">Secreted</keyword>
<keyword id="KW-0800">Toxin</keyword>
<keyword id="KW-0838">Vasoactive</keyword>
<keyword id="KW-0840">Vasodilator</keyword>
<comment type="function">
    <text evidence="2">Increases urine flow and decreases blood pressure when administered to rats by intravenous injection. Inhibits thrombin-induced platelet aggregation. Stimulates cGMP production via the natriuretic peptide receptor-A (NPR1).</text>
</comment>
<comment type="subcellular location">
    <subcellularLocation>
        <location evidence="2">Secreted</location>
    </subcellularLocation>
</comment>
<comment type="tissue specificity">
    <text evidence="2">Expressed by the venom gland.</text>
</comment>
<comment type="mass spectrometry"/>
<comment type="similarity">
    <text evidence="1">Belongs to the natriuretic peptide family.</text>
</comment>